<gene>
    <name evidence="1" type="primary">rpsQ</name>
    <name type="ordered locus">Tfu_2637</name>
</gene>
<organism>
    <name type="scientific">Thermobifida fusca (strain YX)</name>
    <dbReference type="NCBI Taxonomy" id="269800"/>
    <lineage>
        <taxon>Bacteria</taxon>
        <taxon>Bacillati</taxon>
        <taxon>Actinomycetota</taxon>
        <taxon>Actinomycetes</taxon>
        <taxon>Streptosporangiales</taxon>
        <taxon>Nocardiopsidaceae</taxon>
        <taxon>Thermobifida</taxon>
    </lineage>
</organism>
<name>RS17_THEFY</name>
<proteinExistence type="inferred from homology"/>
<feature type="chain" id="PRO_0000233595" description="Small ribosomal subunit protein uS17">
    <location>
        <begin position="1"/>
        <end position="91"/>
    </location>
</feature>
<accession>Q47LK2</accession>
<evidence type="ECO:0000255" key="1">
    <source>
        <dbReference type="HAMAP-Rule" id="MF_01345"/>
    </source>
</evidence>
<evidence type="ECO:0000305" key="2"/>
<keyword id="KW-0687">Ribonucleoprotein</keyword>
<keyword id="KW-0689">Ribosomal protein</keyword>
<keyword id="KW-0694">RNA-binding</keyword>
<keyword id="KW-0699">rRNA-binding</keyword>
<comment type="function">
    <text evidence="1">One of the primary rRNA binding proteins, it binds specifically to the 5'-end of 16S ribosomal RNA.</text>
</comment>
<comment type="subunit">
    <text evidence="1">Part of the 30S ribosomal subunit.</text>
</comment>
<comment type="similarity">
    <text evidence="1">Belongs to the universal ribosomal protein uS17 family.</text>
</comment>
<protein>
    <recommendedName>
        <fullName evidence="1">Small ribosomal subunit protein uS17</fullName>
    </recommendedName>
    <alternativeName>
        <fullName evidence="2">30S ribosomal protein S17</fullName>
    </alternativeName>
</protein>
<sequence>MSEKTTAQERNHRKVREGYVVSDKMDKTVVVAVENRFKHPLYGKIIRRTTKYKAHDEANIAGVGDRVRLMETRPLSATKRWRVVEILEKAK</sequence>
<dbReference type="EMBL" id="CP000088">
    <property type="protein sequence ID" value="AAZ56670.1"/>
    <property type="molecule type" value="Genomic_DNA"/>
</dbReference>
<dbReference type="RefSeq" id="WP_011293060.1">
    <property type="nucleotide sequence ID" value="NC_007333.1"/>
</dbReference>
<dbReference type="SMR" id="Q47LK2"/>
<dbReference type="STRING" id="269800.Tfu_2637"/>
<dbReference type="KEGG" id="tfu:Tfu_2637"/>
<dbReference type="eggNOG" id="COG0186">
    <property type="taxonomic scope" value="Bacteria"/>
</dbReference>
<dbReference type="HOGENOM" id="CLU_073626_1_0_11"/>
<dbReference type="OrthoDB" id="9811714at2"/>
<dbReference type="GO" id="GO:0022627">
    <property type="term" value="C:cytosolic small ribosomal subunit"/>
    <property type="evidence" value="ECO:0007669"/>
    <property type="project" value="TreeGrafter"/>
</dbReference>
<dbReference type="GO" id="GO:0019843">
    <property type="term" value="F:rRNA binding"/>
    <property type="evidence" value="ECO:0007669"/>
    <property type="project" value="UniProtKB-UniRule"/>
</dbReference>
<dbReference type="GO" id="GO:0003735">
    <property type="term" value="F:structural constituent of ribosome"/>
    <property type="evidence" value="ECO:0007669"/>
    <property type="project" value="InterPro"/>
</dbReference>
<dbReference type="GO" id="GO:0006412">
    <property type="term" value="P:translation"/>
    <property type="evidence" value="ECO:0007669"/>
    <property type="project" value="UniProtKB-UniRule"/>
</dbReference>
<dbReference type="CDD" id="cd00364">
    <property type="entry name" value="Ribosomal_uS17"/>
    <property type="match status" value="1"/>
</dbReference>
<dbReference type="FunFam" id="2.40.50.140:FF:000026">
    <property type="entry name" value="30S ribosomal protein S17"/>
    <property type="match status" value="1"/>
</dbReference>
<dbReference type="Gene3D" id="2.40.50.140">
    <property type="entry name" value="Nucleic acid-binding proteins"/>
    <property type="match status" value="1"/>
</dbReference>
<dbReference type="HAMAP" id="MF_01345_B">
    <property type="entry name" value="Ribosomal_uS17_B"/>
    <property type="match status" value="1"/>
</dbReference>
<dbReference type="InterPro" id="IPR012340">
    <property type="entry name" value="NA-bd_OB-fold"/>
</dbReference>
<dbReference type="InterPro" id="IPR000266">
    <property type="entry name" value="Ribosomal_uS17"/>
</dbReference>
<dbReference type="InterPro" id="IPR019984">
    <property type="entry name" value="Ribosomal_uS17_bact/chlr"/>
</dbReference>
<dbReference type="InterPro" id="IPR019979">
    <property type="entry name" value="Ribosomal_uS17_CS"/>
</dbReference>
<dbReference type="NCBIfam" id="NF004123">
    <property type="entry name" value="PRK05610.1"/>
    <property type="match status" value="1"/>
</dbReference>
<dbReference type="NCBIfam" id="TIGR03635">
    <property type="entry name" value="uS17_bact"/>
    <property type="match status" value="1"/>
</dbReference>
<dbReference type="PANTHER" id="PTHR10744">
    <property type="entry name" value="40S RIBOSOMAL PROTEIN S11 FAMILY MEMBER"/>
    <property type="match status" value="1"/>
</dbReference>
<dbReference type="PANTHER" id="PTHR10744:SF1">
    <property type="entry name" value="SMALL RIBOSOMAL SUBUNIT PROTEIN US17M"/>
    <property type="match status" value="1"/>
</dbReference>
<dbReference type="Pfam" id="PF00366">
    <property type="entry name" value="Ribosomal_S17"/>
    <property type="match status" value="1"/>
</dbReference>
<dbReference type="PRINTS" id="PR00973">
    <property type="entry name" value="RIBOSOMALS17"/>
</dbReference>
<dbReference type="SUPFAM" id="SSF50249">
    <property type="entry name" value="Nucleic acid-binding proteins"/>
    <property type="match status" value="1"/>
</dbReference>
<dbReference type="PROSITE" id="PS00056">
    <property type="entry name" value="RIBOSOMAL_S17"/>
    <property type="match status" value="1"/>
</dbReference>
<reference key="1">
    <citation type="journal article" date="2007" name="J. Bacteriol.">
        <title>Genome sequence and analysis of the soil cellulolytic actinomycete Thermobifida fusca YX.</title>
        <authorList>
            <person name="Lykidis A."/>
            <person name="Mavromatis K."/>
            <person name="Ivanova N."/>
            <person name="Anderson I."/>
            <person name="Land M."/>
            <person name="DiBartolo G."/>
            <person name="Martinez M."/>
            <person name="Lapidus A."/>
            <person name="Lucas S."/>
            <person name="Copeland A."/>
            <person name="Richardson P."/>
            <person name="Wilson D.B."/>
            <person name="Kyrpides N."/>
        </authorList>
    </citation>
    <scope>NUCLEOTIDE SEQUENCE [LARGE SCALE GENOMIC DNA]</scope>
    <source>
        <strain>YX</strain>
    </source>
</reference>